<feature type="chain" id="PRO_0000169381" description="Uncharacterized protein YqgA">
    <location>
        <begin position="1"/>
        <end position="235"/>
    </location>
</feature>
<feature type="transmembrane region" description="Helical" evidence="1">
    <location>
        <begin position="2"/>
        <end position="22"/>
    </location>
</feature>
<feature type="transmembrane region" description="Helical" evidence="1">
    <location>
        <begin position="34"/>
        <end position="54"/>
    </location>
</feature>
<feature type="transmembrane region" description="Helical" evidence="1">
    <location>
        <begin position="56"/>
        <end position="76"/>
    </location>
</feature>
<feature type="transmembrane region" description="Helical" evidence="1">
    <location>
        <begin position="102"/>
        <end position="122"/>
    </location>
</feature>
<feature type="transmembrane region" description="Helical" evidence="1">
    <location>
        <begin position="147"/>
        <end position="167"/>
    </location>
</feature>
<feature type="transmembrane region" description="Helical" evidence="1">
    <location>
        <begin position="178"/>
        <end position="198"/>
    </location>
</feature>
<feature type="transmembrane region" description="Helical" evidence="1">
    <location>
        <begin position="210"/>
        <end position="230"/>
    </location>
</feature>
<sequence length="235" mass="24614">MVIGPFINASAVLLGGVLGALLSQRLPERIRVSMTSIFGLASLGIGILLVVKCANLPAMVLATLLGALIGEICLLEKGVNTAVAKAQNLFRHSRKKPAHESFIQNYVAIIVLFCASGTGIFGAMNEGMTGDPSILIAKSFLDFFTAMIFACSLGIAVSVISIPLLIIQLTLAWAAALILPLTTPSMMADFSAVGGLLLLATGLRICGIKMFPVVNMLPALLLAMPLSAAWTAWFA</sequence>
<proteinExistence type="predicted"/>
<dbReference type="EMBL" id="U28377">
    <property type="protein sequence ID" value="AAA69134.1"/>
    <property type="molecule type" value="Genomic_DNA"/>
</dbReference>
<dbReference type="EMBL" id="U00096">
    <property type="protein sequence ID" value="AAC76003.1"/>
    <property type="molecule type" value="Genomic_DNA"/>
</dbReference>
<dbReference type="EMBL" id="AP009048">
    <property type="protein sequence ID" value="BAE77029.1"/>
    <property type="molecule type" value="Genomic_DNA"/>
</dbReference>
<dbReference type="PIR" id="E65082">
    <property type="entry name" value="E65082"/>
</dbReference>
<dbReference type="RefSeq" id="NP_417441.1">
    <property type="nucleotide sequence ID" value="NC_000913.3"/>
</dbReference>
<dbReference type="RefSeq" id="WP_000234514.1">
    <property type="nucleotide sequence ID" value="NZ_LN832404.1"/>
</dbReference>
<dbReference type="BioGRID" id="4262037">
    <property type="interactions" value="12"/>
</dbReference>
<dbReference type="FunCoup" id="Q46831">
    <property type="interactions" value="231"/>
</dbReference>
<dbReference type="STRING" id="511145.b2966"/>
<dbReference type="TCDB" id="9.B.120.1.1">
    <property type="family name" value="the duf554 (duf554) family"/>
</dbReference>
<dbReference type="PaxDb" id="511145-b2966"/>
<dbReference type="EnsemblBacteria" id="AAC76003">
    <property type="protein sequence ID" value="AAC76003"/>
    <property type="gene ID" value="b2966"/>
</dbReference>
<dbReference type="GeneID" id="947462"/>
<dbReference type="KEGG" id="ecj:JW2934"/>
<dbReference type="KEGG" id="eco:b2966"/>
<dbReference type="KEGG" id="ecoc:C3026_16230"/>
<dbReference type="PATRIC" id="fig|1411691.4.peg.3764"/>
<dbReference type="EchoBASE" id="EB2811"/>
<dbReference type="eggNOG" id="COG1811">
    <property type="taxonomic scope" value="Bacteria"/>
</dbReference>
<dbReference type="HOGENOM" id="CLU_091659_2_0_6"/>
<dbReference type="InParanoid" id="Q46831"/>
<dbReference type="OMA" id="FCVGPMT"/>
<dbReference type="OrthoDB" id="9797976at2"/>
<dbReference type="PhylomeDB" id="Q46831"/>
<dbReference type="BioCyc" id="EcoCyc:G7534-MONOMER"/>
<dbReference type="PRO" id="PR:Q46831"/>
<dbReference type="Proteomes" id="UP000000625">
    <property type="component" value="Chromosome"/>
</dbReference>
<dbReference type="GO" id="GO:0005886">
    <property type="term" value="C:plasma membrane"/>
    <property type="evidence" value="ECO:0000314"/>
    <property type="project" value="EcoCyc"/>
</dbReference>
<dbReference type="InterPro" id="IPR007563">
    <property type="entry name" value="DUF554"/>
</dbReference>
<dbReference type="PANTHER" id="PTHR36111:SF2">
    <property type="entry name" value="INNER MEMBRANE PROTEIN"/>
    <property type="match status" value="1"/>
</dbReference>
<dbReference type="PANTHER" id="PTHR36111">
    <property type="entry name" value="INNER MEMBRANE PROTEIN-RELATED"/>
    <property type="match status" value="1"/>
</dbReference>
<dbReference type="Pfam" id="PF04474">
    <property type="entry name" value="DUF554"/>
    <property type="match status" value="1"/>
</dbReference>
<reference key="1">
    <citation type="journal article" date="1997" name="Science">
        <title>The complete genome sequence of Escherichia coli K-12.</title>
        <authorList>
            <person name="Blattner F.R."/>
            <person name="Plunkett G. III"/>
            <person name="Bloch C.A."/>
            <person name="Perna N.T."/>
            <person name="Burland V."/>
            <person name="Riley M."/>
            <person name="Collado-Vides J."/>
            <person name="Glasner J.D."/>
            <person name="Rode C.K."/>
            <person name="Mayhew G.F."/>
            <person name="Gregor J."/>
            <person name="Davis N.W."/>
            <person name="Kirkpatrick H.A."/>
            <person name="Goeden M.A."/>
            <person name="Rose D.J."/>
            <person name="Mau B."/>
            <person name="Shao Y."/>
        </authorList>
    </citation>
    <scope>NUCLEOTIDE SEQUENCE [LARGE SCALE GENOMIC DNA]</scope>
    <source>
        <strain>K12 / MG1655 / ATCC 47076</strain>
    </source>
</reference>
<reference key="2">
    <citation type="journal article" date="2006" name="Mol. Syst. Biol.">
        <title>Highly accurate genome sequences of Escherichia coli K-12 strains MG1655 and W3110.</title>
        <authorList>
            <person name="Hayashi K."/>
            <person name="Morooka N."/>
            <person name="Yamamoto Y."/>
            <person name="Fujita K."/>
            <person name="Isono K."/>
            <person name="Choi S."/>
            <person name="Ohtsubo E."/>
            <person name="Baba T."/>
            <person name="Wanner B.L."/>
            <person name="Mori H."/>
            <person name="Horiuchi T."/>
        </authorList>
    </citation>
    <scope>NUCLEOTIDE SEQUENCE [LARGE SCALE GENOMIC DNA]</scope>
    <source>
        <strain>K12 / W3110 / ATCC 27325 / DSM 5911</strain>
    </source>
</reference>
<comment type="subcellular location">
    <subcellularLocation>
        <location evidence="2">Cell membrane</location>
        <topology evidence="2">Multi-pass membrane protein</topology>
    </subcellularLocation>
</comment>
<protein>
    <recommendedName>
        <fullName>Uncharacterized protein YqgA</fullName>
    </recommendedName>
</protein>
<name>YQGA_ECOLI</name>
<evidence type="ECO:0000255" key="1"/>
<evidence type="ECO:0000305" key="2"/>
<keyword id="KW-1003">Cell membrane</keyword>
<keyword id="KW-0472">Membrane</keyword>
<keyword id="KW-1185">Reference proteome</keyword>
<keyword id="KW-0812">Transmembrane</keyword>
<keyword id="KW-1133">Transmembrane helix</keyword>
<accession>Q46831</accession>
<accession>Q2M9M7</accession>
<organism>
    <name type="scientific">Escherichia coli (strain K12)</name>
    <dbReference type="NCBI Taxonomy" id="83333"/>
    <lineage>
        <taxon>Bacteria</taxon>
        <taxon>Pseudomonadati</taxon>
        <taxon>Pseudomonadota</taxon>
        <taxon>Gammaproteobacteria</taxon>
        <taxon>Enterobacterales</taxon>
        <taxon>Enterobacteriaceae</taxon>
        <taxon>Escherichia</taxon>
    </lineage>
</organism>
<gene>
    <name type="primary">yqgA</name>
    <name type="ordered locus">b2966</name>
    <name type="ordered locus">JW2934</name>
</gene>